<protein>
    <recommendedName>
        <fullName evidence="1">UPF0434 protein YcaR</fullName>
    </recommendedName>
</protein>
<accession>A9MHW6</accession>
<organism>
    <name type="scientific">Salmonella arizonae (strain ATCC BAA-731 / CDC346-86 / RSK2980)</name>
    <dbReference type="NCBI Taxonomy" id="41514"/>
    <lineage>
        <taxon>Bacteria</taxon>
        <taxon>Pseudomonadati</taxon>
        <taxon>Pseudomonadota</taxon>
        <taxon>Gammaproteobacteria</taxon>
        <taxon>Enterobacterales</taxon>
        <taxon>Enterobacteriaceae</taxon>
        <taxon>Salmonella</taxon>
    </lineage>
</organism>
<sequence length="60" mass="6872">MDHRLLEIIACPVCNGKLWYNQEKQELICKLDNLAFPLRDGIPVLLENEARSLTSDESKS</sequence>
<reference key="1">
    <citation type="submission" date="2007-11" db="EMBL/GenBank/DDBJ databases">
        <authorList>
            <consortium name="The Salmonella enterica serovar Arizonae Genome Sequencing Project"/>
            <person name="McClelland M."/>
            <person name="Sanderson E.K."/>
            <person name="Porwollik S."/>
            <person name="Spieth J."/>
            <person name="Clifton W.S."/>
            <person name="Fulton R."/>
            <person name="Chunyan W."/>
            <person name="Wollam A."/>
            <person name="Shah N."/>
            <person name="Pepin K."/>
            <person name="Bhonagiri V."/>
            <person name="Nash W."/>
            <person name="Johnson M."/>
            <person name="Thiruvilangam P."/>
            <person name="Wilson R."/>
        </authorList>
    </citation>
    <scope>NUCLEOTIDE SEQUENCE [LARGE SCALE GENOMIC DNA]</scope>
    <source>
        <strain>ATCC BAA-731 / CDC346-86 / RSK2980</strain>
    </source>
</reference>
<comment type="similarity">
    <text evidence="1">Belongs to the UPF0434 family.</text>
</comment>
<evidence type="ECO:0000255" key="1">
    <source>
        <dbReference type="HAMAP-Rule" id="MF_01187"/>
    </source>
</evidence>
<gene>
    <name evidence="1" type="primary">ycaR</name>
    <name type="ordered locus">SARI_01975</name>
</gene>
<feature type="chain" id="PRO_1000085461" description="UPF0434 protein YcaR">
    <location>
        <begin position="1"/>
        <end position="60"/>
    </location>
</feature>
<keyword id="KW-1185">Reference proteome</keyword>
<dbReference type="EMBL" id="CP000880">
    <property type="protein sequence ID" value="ABX21856.1"/>
    <property type="molecule type" value="Genomic_DNA"/>
</dbReference>
<dbReference type="SMR" id="A9MHW6"/>
<dbReference type="STRING" id="41514.SARI_01975"/>
<dbReference type="KEGG" id="ses:SARI_01975"/>
<dbReference type="HOGENOM" id="CLU_155659_3_1_6"/>
<dbReference type="Proteomes" id="UP000002084">
    <property type="component" value="Chromosome"/>
</dbReference>
<dbReference type="GO" id="GO:0005829">
    <property type="term" value="C:cytosol"/>
    <property type="evidence" value="ECO:0007669"/>
    <property type="project" value="TreeGrafter"/>
</dbReference>
<dbReference type="FunFam" id="2.20.25.10:FF:000002">
    <property type="entry name" value="UPF0434 protein YcaR"/>
    <property type="match status" value="1"/>
</dbReference>
<dbReference type="Gene3D" id="2.20.25.10">
    <property type="match status" value="1"/>
</dbReference>
<dbReference type="HAMAP" id="MF_01187">
    <property type="entry name" value="UPF0434"/>
    <property type="match status" value="1"/>
</dbReference>
<dbReference type="InterPro" id="IPR005651">
    <property type="entry name" value="Trm112-like"/>
</dbReference>
<dbReference type="NCBIfam" id="NF008806">
    <property type="entry name" value="PRK11827.1"/>
    <property type="match status" value="1"/>
</dbReference>
<dbReference type="PANTHER" id="PTHR33505:SF4">
    <property type="entry name" value="PROTEIN PREY, MITOCHONDRIAL"/>
    <property type="match status" value="1"/>
</dbReference>
<dbReference type="PANTHER" id="PTHR33505">
    <property type="entry name" value="ZGC:162634"/>
    <property type="match status" value="1"/>
</dbReference>
<dbReference type="Pfam" id="PF03966">
    <property type="entry name" value="Trm112p"/>
    <property type="match status" value="1"/>
</dbReference>
<dbReference type="SUPFAM" id="SSF158997">
    <property type="entry name" value="Trm112p-like"/>
    <property type="match status" value="1"/>
</dbReference>
<name>YCAR_SALAR</name>
<proteinExistence type="inferred from homology"/>